<keyword id="KW-0687">Ribonucleoprotein</keyword>
<keyword id="KW-0689">Ribosomal protein</keyword>
<keyword id="KW-0694">RNA-binding</keyword>
<keyword id="KW-0699">rRNA-binding</keyword>
<reference key="1">
    <citation type="journal article" date="2004" name="Proc. Natl. Acad. Sci. U.S.A.">
        <title>The genome sequence of the probiotic intestinal bacterium Lactobacillus johnsonii NCC 533.</title>
        <authorList>
            <person name="Pridmore R.D."/>
            <person name="Berger B."/>
            <person name="Desiere F."/>
            <person name="Vilanova D."/>
            <person name="Barretto C."/>
            <person name="Pittet A.-C."/>
            <person name="Zwahlen M.-C."/>
            <person name="Rouvet M."/>
            <person name="Altermann E."/>
            <person name="Barrangou R."/>
            <person name="Mollet B."/>
            <person name="Mercenier A."/>
            <person name="Klaenhammer T."/>
            <person name="Arigoni F."/>
            <person name="Schell M.A."/>
        </authorList>
    </citation>
    <scope>NUCLEOTIDE SEQUENCE [LARGE SCALE GENOMIC DNA]</scope>
    <source>
        <strain>CNCM I-1225 / La1 / NCC 533</strain>
    </source>
</reference>
<protein>
    <recommendedName>
        <fullName evidence="1">Large ribosomal subunit protein uL4</fullName>
    </recommendedName>
    <alternativeName>
        <fullName evidence="3">50S ribosomal protein L4</fullName>
    </alternativeName>
</protein>
<comment type="function">
    <text evidence="1">One of the primary rRNA binding proteins, this protein initially binds near the 5'-end of the 23S rRNA. It is important during the early stages of 50S assembly. It makes multiple contacts with different domains of the 23S rRNA in the assembled 50S subunit and ribosome.</text>
</comment>
<comment type="function">
    <text evidence="1">Forms part of the polypeptide exit tunnel.</text>
</comment>
<comment type="subunit">
    <text evidence="1">Part of the 50S ribosomal subunit.</text>
</comment>
<comment type="similarity">
    <text evidence="1">Belongs to the universal ribosomal protein uL4 family.</text>
</comment>
<sequence length="205" mass="22392">MANLEIIDQKGKSAGNVDLNEEIFGIEPNESVVFDAIIRQRAGKRQGTSAVKNRSAVRGGGKKPWRQKGTGRARQGSIRAPQWRGGGTVFGPTPRSYKMDMPRKARRLAMKSVLSQKVADNDLIILDQLTLEAPKTKELKAILDNANVSGKVLVVSDDKNVQLSGKNLPKVKVVPVNGLNVVDAVDYQKLVLTQDAIKRIEEVLA</sequence>
<proteinExistence type="inferred from homology"/>
<evidence type="ECO:0000255" key="1">
    <source>
        <dbReference type="HAMAP-Rule" id="MF_01328"/>
    </source>
</evidence>
<evidence type="ECO:0000256" key="2">
    <source>
        <dbReference type="SAM" id="MobiDB-lite"/>
    </source>
</evidence>
<evidence type="ECO:0000305" key="3"/>
<dbReference type="EMBL" id="AE017198">
    <property type="protein sequence ID" value="AAS08326.1"/>
    <property type="molecule type" value="Genomic_DNA"/>
</dbReference>
<dbReference type="RefSeq" id="WP_004895875.1">
    <property type="nucleotide sequence ID" value="NC_005362.1"/>
</dbReference>
<dbReference type="SMR" id="P61064"/>
<dbReference type="GeneID" id="83569755"/>
<dbReference type="KEGG" id="ljo:LJ_0340"/>
<dbReference type="eggNOG" id="COG0088">
    <property type="taxonomic scope" value="Bacteria"/>
</dbReference>
<dbReference type="HOGENOM" id="CLU_041575_5_2_9"/>
<dbReference type="Proteomes" id="UP000000581">
    <property type="component" value="Chromosome"/>
</dbReference>
<dbReference type="GO" id="GO:1990904">
    <property type="term" value="C:ribonucleoprotein complex"/>
    <property type="evidence" value="ECO:0007669"/>
    <property type="project" value="UniProtKB-KW"/>
</dbReference>
<dbReference type="GO" id="GO:0005840">
    <property type="term" value="C:ribosome"/>
    <property type="evidence" value="ECO:0007669"/>
    <property type="project" value="UniProtKB-KW"/>
</dbReference>
<dbReference type="GO" id="GO:0019843">
    <property type="term" value="F:rRNA binding"/>
    <property type="evidence" value="ECO:0007669"/>
    <property type="project" value="UniProtKB-UniRule"/>
</dbReference>
<dbReference type="GO" id="GO:0003735">
    <property type="term" value="F:structural constituent of ribosome"/>
    <property type="evidence" value="ECO:0007669"/>
    <property type="project" value="InterPro"/>
</dbReference>
<dbReference type="GO" id="GO:0006412">
    <property type="term" value="P:translation"/>
    <property type="evidence" value="ECO:0007669"/>
    <property type="project" value="UniProtKB-UniRule"/>
</dbReference>
<dbReference type="Gene3D" id="3.40.1370.10">
    <property type="match status" value="1"/>
</dbReference>
<dbReference type="HAMAP" id="MF_01328_B">
    <property type="entry name" value="Ribosomal_uL4_B"/>
    <property type="match status" value="1"/>
</dbReference>
<dbReference type="InterPro" id="IPR002136">
    <property type="entry name" value="Ribosomal_uL4"/>
</dbReference>
<dbReference type="InterPro" id="IPR013005">
    <property type="entry name" value="Ribosomal_uL4-like"/>
</dbReference>
<dbReference type="InterPro" id="IPR023574">
    <property type="entry name" value="Ribosomal_uL4_dom_sf"/>
</dbReference>
<dbReference type="NCBIfam" id="TIGR03953">
    <property type="entry name" value="rplD_bact"/>
    <property type="match status" value="1"/>
</dbReference>
<dbReference type="PANTHER" id="PTHR10746">
    <property type="entry name" value="50S RIBOSOMAL PROTEIN L4"/>
    <property type="match status" value="1"/>
</dbReference>
<dbReference type="PANTHER" id="PTHR10746:SF6">
    <property type="entry name" value="LARGE RIBOSOMAL SUBUNIT PROTEIN UL4M"/>
    <property type="match status" value="1"/>
</dbReference>
<dbReference type="Pfam" id="PF00573">
    <property type="entry name" value="Ribosomal_L4"/>
    <property type="match status" value="1"/>
</dbReference>
<dbReference type="SUPFAM" id="SSF52166">
    <property type="entry name" value="Ribosomal protein L4"/>
    <property type="match status" value="1"/>
</dbReference>
<organism>
    <name type="scientific">Lactobacillus johnsonii (strain CNCM I-12250 / La1 / NCC 533)</name>
    <dbReference type="NCBI Taxonomy" id="257314"/>
    <lineage>
        <taxon>Bacteria</taxon>
        <taxon>Bacillati</taxon>
        <taxon>Bacillota</taxon>
        <taxon>Bacilli</taxon>
        <taxon>Lactobacillales</taxon>
        <taxon>Lactobacillaceae</taxon>
        <taxon>Lactobacillus</taxon>
    </lineage>
</organism>
<gene>
    <name evidence="1" type="primary">rplD</name>
    <name type="ordered locus">LJ_0340</name>
</gene>
<feature type="chain" id="PRO_0000129227" description="Large ribosomal subunit protein uL4">
    <location>
        <begin position="1"/>
        <end position="205"/>
    </location>
</feature>
<feature type="region of interest" description="Disordered" evidence="2">
    <location>
        <begin position="45"/>
        <end position="97"/>
    </location>
</feature>
<feature type="compositionally biased region" description="Basic residues" evidence="2">
    <location>
        <begin position="60"/>
        <end position="71"/>
    </location>
</feature>
<name>RL4_LACJO</name>
<accession>P61064</accession>